<dbReference type="EC" id="6.1.1.7" evidence="1"/>
<dbReference type="EMBL" id="CP000514">
    <property type="protein sequence ID" value="ABM18061.1"/>
    <property type="molecule type" value="Genomic_DNA"/>
</dbReference>
<dbReference type="RefSeq" id="WP_011784481.1">
    <property type="nucleotide sequence ID" value="NC_008740.1"/>
</dbReference>
<dbReference type="SMR" id="A1TZ92"/>
<dbReference type="STRING" id="351348.Maqu_0965"/>
<dbReference type="KEGG" id="maq:Maqu_0965"/>
<dbReference type="eggNOG" id="COG0013">
    <property type="taxonomic scope" value="Bacteria"/>
</dbReference>
<dbReference type="HOGENOM" id="CLU_004485_1_1_6"/>
<dbReference type="OrthoDB" id="9803884at2"/>
<dbReference type="Proteomes" id="UP000000998">
    <property type="component" value="Chromosome"/>
</dbReference>
<dbReference type="GO" id="GO:0005829">
    <property type="term" value="C:cytosol"/>
    <property type="evidence" value="ECO:0007669"/>
    <property type="project" value="TreeGrafter"/>
</dbReference>
<dbReference type="GO" id="GO:0004813">
    <property type="term" value="F:alanine-tRNA ligase activity"/>
    <property type="evidence" value="ECO:0007669"/>
    <property type="project" value="UniProtKB-UniRule"/>
</dbReference>
<dbReference type="GO" id="GO:0002161">
    <property type="term" value="F:aminoacyl-tRNA deacylase activity"/>
    <property type="evidence" value="ECO:0007669"/>
    <property type="project" value="TreeGrafter"/>
</dbReference>
<dbReference type="GO" id="GO:0005524">
    <property type="term" value="F:ATP binding"/>
    <property type="evidence" value="ECO:0007669"/>
    <property type="project" value="UniProtKB-UniRule"/>
</dbReference>
<dbReference type="GO" id="GO:0000049">
    <property type="term" value="F:tRNA binding"/>
    <property type="evidence" value="ECO:0007669"/>
    <property type="project" value="UniProtKB-KW"/>
</dbReference>
<dbReference type="GO" id="GO:0008270">
    <property type="term" value="F:zinc ion binding"/>
    <property type="evidence" value="ECO:0007669"/>
    <property type="project" value="UniProtKB-UniRule"/>
</dbReference>
<dbReference type="GO" id="GO:0006419">
    <property type="term" value="P:alanyl-tRNA aminoacylation"/>
    <property type="evidence" value="ECO:0007669"/>
    <property type="project" value="UniProtKB-UniRule"/>
</dbReference>
<dbReference type="GO" id="GO:0045892">
    <property type="term" value="P:negative regulation of DNA-templated transcription"/>
    <property type="evidence" value="ECO:0007669"/>
    <property type="project" value="TreeGrafter"/>
</dbReference>
<dbReference type="CDD" id="cd00673">
    <property type="entry name" value="AlaRS_core"/>
    <property type="match status" value="1"/>
</dbReference>
<dbReference type="FunFam" id="2.40.30.130:FF:000001">
    <property type="entry name" value="Alanine--tRNA ligase"/>
    <property type="match status" value="1"/>
</dbReference>
<dbReference type="FunFam" id="3.10.310.40:FF:000001">
    <property type="entry name" value="Alanine--tRNA ligase"/>
    <property type="match status" value="1"/>
</dbReference>
<dbReference type="FunFam" id="3.30.54.20:FF:000001">
    <property type="entry name" value="Alanine--tRNA ligase"/>
    <property type="match status" value="1"/>
</dbReference>
<dbReference type="FunFam" id="3.30.930.10:FF:000004">
    <property type="entry name" value="Alanine--tRNA ligase"/>
    <property type="match status" value="1"/>
</dbReference>
<dbReference type="FunFam" id="3.30.980.10:FF:000004">
    <property type="entry name" value="Alanine--tRNA ligase, cytoplasmic"/>
    <property type="match status" value="1"/>
</dbReference>
<dbReference type="Gene3D" id="2.40.30.130">
    <property type="match status" value="1"/>
</dbReference>
<dbReference type="Gene3D" id="3.10.310.40">
    <property type="match status" value="1"/>
</dbReference>
<dbReference type="Gene3D" id="3.30.54.20">
    <property type="match status" value="1"/>
</dbReference>
<dbReference type="Gene3D" id="6.10.250.550">
    <property type="match status" value="1"/>
</dbReference>
<dbReference type="Gene3D" id="3.30.930.10">
    <property type="entry name" value="Bira Bifunctional Protein, Domain 2"/>
    <property type="match status" value="1"/>
</dbReference>
<dbReference type="Gene3D" id="3.30.980.10">
    <property type="entry name" value="Threonyl-trna Synthetase, Chain A, domain 2"/>
    <property type="match status" value="1"/>
</dbReference>
<dbReference type="HAMAP" id="MF_00036_B">
    <property type="entry name" value="Ala_tRNA_synth_B"/>
    <property type="match status" value="1"/>
</dbReference>
<dbReference type="InterPro" id="IPR045864">
    <property type="entry name" value="aa-tRNA-synth_II/BPL/LPL"/>
</dbReference>
<dbReference type="InterPro" id="IPR002318">
    <property type="entry name" value="Ala-tRNA-lgiase_IIc"/>
</dbReference>
<dbReference type="InterPro" id="IPR018162">
    <property type="entry name" value="Ala-tRNA-ligase_IIc_anticod-bd"/>
</dbReference>
<dbReference type="InterPro" id="IPR018165">
    <property type="entry name" value="Ala-tRNA-synth_IIc_core"/>
</dbReference>
<dbReference type="InterPro" id="IPR018164">
    <property type="entry name" value="Ala-tRNA-synth_IIc_N"/>
</dbReference>
<dbReference type="InterPro" id="IPR050058">
    <property type="entry name" value="Ala-tRNA_ligase"/>
</dbReference>
<dbReference type="InterPro" id="IPR023033">
    <property type="entry name" value="Ala_tRNA_ligase_euk/bac"/>
</dbReference>
<dbReference type="InterPro" id="IPR003156">
    <property type="entry name" value="DHHA1_dom"/>
</dbReference>
<dbReference type="InterPro" id="IPR018163">
    <property type="entry name" value="Thr/Ala-tRNA-synth_IIc_edit"/>
</dbReference>
<dbReference type="InterPro" id="IPR009000">
    <property type="entry name" value="Transl_B-barrel_sf"/>
</dbReference>
<dbReference type="InterPro" id="IPR012947">
    <property type="entry name" value="tRNA_SAD"/>
</dbReference>
<dbReference type="NCBIfam" id="TIGR00344">
    <property type="entry name" value="alaS"/>
    <property type="match status" value="1"/>
</dbReference>
<dbReference type="PANTHER" id="PTHR11777:SF9">
    <property type="entry name" value="ALANINE--TRNA LIGASE, CYTOPLASMIC"/>
    <property type="match status" value="1"/>
</dbReference>
<dbReference type="PANTHER" id="PTHR11777">
    <property type="entry name" value="ALANYL-TRNA SYNTHETASE"/>
    <property type="match status" value="1"/>
</dbReference>
<dbReference type="Pfam" id="PF02272">
    <property type="entry name" value="DHHA1"/>
    <property type="match status" value="1"/>
</dbReference>
<dbReference type="Pfam" id="PF01411">
    <property type="entry name" value="tRNA-synt_2c"/>
    <property type="match status" value="1"/>
</dbReference>
<dbReference type="Pfam" id="PF07973">
    <property type="entry name" value="tRNA_SAD"/>
    <property type="match status" value="1"/>
</dbReference>
<dbReference type="PRINTS" id="PR00980">
    <property type="entry name" value="TRNASYNTHALA"/>
</dbReference>
<dbReference type="SMART" id="SM00863">
    <property type="entry name" value="tRNA_SAD"/>
    <property type="match status" value="1"/>
</dbReference>
<dbReference type="SUPFAM" id="SSF55681">
    <property type="entry name" value="Class II aaRS and biotin synthetases"/>
    <property type="match status" value="1"/>
</dbReference>
<dbReference type="SUPFAM" id="SSF101353">
    <property type="entry name" value="Putative anticodon-binding domain of alanyl-tRNA synthetase (AlaRS)"/>
    <property type="match status" value="1"/>
</dbReference>
<dbReference type="SUPFAM" id="SSF55186">
    <property type="entry name" value="ThrRS/AlaRS common domain"/>
    <property type="match status" value="1"/>
</dbReference>
<dbReference type="SUPFAM" id="SSF50447">
    <property type="entry name" value="Translation proteins"/>
    <property type="match status" value="1"/>
</dbReference>
<dbReference type="PROSITE" id="PS50860">
    <property type="entry name" value="AA_TRNA_LIGASE_II_ALA"/>
    <property type="match status" value="1"/>
</dbReference>
<feature type="chain" id="PRO_0000347667" description="Alanine--tRNA ligase">
    <location>
        <begin position="1"/>
        <end position="876"/>
    </location>
</feature>
<feature type="binding site" evidence="1">
    <location>
        <position position="562"/>
    </location>
    <ligand>
        <name>Zn(2+)</name>
        <dbReference type="ChEBI" id="CHEBI:29105"/>
    </ligand>
</feature>
<feature type="binding site" evidence="1">
    <location>
        <position position="566"/>
    </location>
    <ligand>
        <name>Zn(2+)</name>
        <dbReference type="ChEBI" id="CHEBI:29105"/>
    </ligand>
</feature>
<feature type="binding site" evidence="1">
    <location>
        <position position="666"/>
    </location>
    <ligand>
        <name>Zn(2+)</name>
        <dbReference type="ChEBI" id="CHEBI:29105"/>
    </ligand>
</feature>
<feature type="binding site" evidence="1">
    <location>
        <position position="670"/>
    </location>
    <ligand>
        <name>Zn(2+)</name>
        <dbReference type="ChEBI" id="CHEBI:29105"/>
    </ligand>
</feature>
<gene>
    <name evidence="1" type="primary">alaS</name>
    <name type="ordered locus">Maqu_0965</name>
</gene>
<reference key="1">
    <citation type="journal article" date="2011" name="Appl. Environ. Microbiol.">
        <title>Genomic potential of Marinobacter aquaeolei, a biogeochemical 'opportunitroph'.</title>
        <authorList>
            <person name="Singer E."/>
            <person name="Webb E.A."/>
            <person name="Nelson W.C."/>
            <person name="Heidelberg J.F."/>
            <person name="Ivanova N."/>
            <person name="Pati A."/>
            <person name="Edwards K.J."/>
        </authorList>
    </citation>
    <scope>NUCLEOTIDE SEQUENCE [LARGE SCALE GENOMIC DNA]</scope>
    <source>
        <strain>ATCC 700491 / DSM 11845 / VT8</strain>
    </source>
</reference>
<evidence type="ECO:0000255" key="1">
    <source>
        <dbReference type="HAMAP-Rule" id="MF_00036"/>
    </source>
</evidence>
<proteinExistence type="inferred from homology"/>
<sequence>MKTAELRQAFLEYFQQQGHAIVPSSSLVPHDDPTLLFTNAGMNQFKDLFLGREERDYTRATSSQKCVRAGGKHNDLENVGYTARHHTFFEMLGNFSFGDYFKREAINFAWTFLTGEQHLNLPQEKLWVTVYAEDDEAFDIWNQEIGVPAERIVRIGDNKGARYASDNFWQMGDTGPCGPCTEIFFDHGPDVAGGPPGSPEEDGDRYIEIWNVVFMQYNRTADGEMLNLPKPSVDTGMGLERIAAVLQGVHSNYEIDLFQDLLKAASDILGGAATTEASLRVVADHIRSCAFLIADGVMPSNEGRGFVLRRIIRRAARHGNKLGATQPFFYKLTGALVELMGEAYPQLVSSRKQIEKVLLQEEEQFAKTLDKGLRLLEQDIAELKGTEIPGETVFTLYDTYGFPVDLTNDIARERGLTLDYEGYEKAMEAQRDRARAASKFGIDYNAAGITIEGKTEFTGYDHVDGHERIRTVLVNGEERNAEAGDECVVVLERTPFYAESGGQVGDTGLLTWSGGRFQVTDTRKEGDNHLHVGTLIEGELFPGLEVDARIDHARRERTKRNHSATHLLHAALRNILGEHVTQKGSLVDPDKLRFDFSHFEAVTPEQLREIERTVNEQILENTPVDIDITDMDTAKEKGAMALFGEKYGDVVRVLTMGTDKYSVELCGGTHVARTGDIGLFRITSESGISSGVRRIEAVTGLGALEWVDETERTLRETARLVKGTRDSVVDKVKQVLDRNRQLEKDVDALKAKLASSAGTDLAGSAVEVAGLKVVASEMEGADRKALMETADQLKNKLGEGVVVLATVEDGKVVLVAGVTKSATNRIKAGDLMKHLASLVDGKGGGRPDMAQGGGNDPSRLAEALAGVPAWVEQNIG</sequence>
<accession>A1TZ92</accession>
<keyword id="KW-0030">Aminoacyl-tRNA synthetase</keyword>
<keyword id="KW-0067">ATP-binding</keyword>
<keyword id="KW-0963">Cytoplasm</keyword>
<keyword id="KW-0436">Ligase</keyword>
<keyword id="KW-0479">Metal-binding</keyword>
<keyword id="KW-0547">Nucleotide-binding</keyword>
<keyword id="KW-0648">Protein biosynthesis</keyword>
<keyword id="KW-0694">RNA-binding</keyword>
<keyword id="KW-0820">tRNA-binding</keyword>
<keyword id="KW-0862">Zinc</keyword>
<name>SYA_MARN8</name>
<protein>
    <recommendedName>
        <fullName evidence="1">Alanine--tRNA ligase</fullName>
        <ecNumber evidence="1">6.1.1.7</ecNumber>
    </recommendedName>
    <alternativeName>
        <fullName evidence="1">Alanyl-tRNA synthetase</fullName>
        <shortName evidence="1">AlaRS</shortName>
    </alternativeName>
</protein>
<organism>
    <name type="scientific">Marinobacter nauticus (strain ATCC 700491 / DSM 11845 / VT8)</name>
    <name type="common">Marinobacter aquaeolei</name>
    <dbReference type="NCBI Taxonomy" id="351348"/>
    <lineage>
        <taxon>Bacteria</taxon>
        <taxon>Pseudomonadati</taxon>
        <taxon>Pseudomonadota</taxon>
        <taxon>Gammaproteobacteria</taxon>
        <taxon>Pseudomonadales</taxon>
        <taxon>Marinobacteraceae</taxon>
        <taxon>Marinobacter</taxon>
    </lineage>
</organism>
<comment type="function">
    <text evidence="1">Catalyzes the attachment of alanine to tRNA(Ala) in a two-step reaction: alanine is first activated by ATP to form Ala-AMP and then transferred to the acceptor end of tRNA(Ala). Also edits incorrectly charged Ser-tRNA(Ala) and Gly-tRNA(Ala) via its editing domain.</text>
</comment>
<comment type="catalytic activity">
    <reaction evidence="1">
        <text>tRNA(Ala) + L-alanine + ATP = L-alanyl-tRNA(Ala) + AMP + diphosphate</text>
        <dbReference type="Rhea" id="RHEA:12540"/>
        <dbReference type="Rhea" id="RHEA-COMP:9657"/>
        <dbReference type="Rhea" id="RHEA-COMP:9923"/>
        <dbReference type="ChEBI" id="CHEBI:30616"/>
        <dbReference type="ChEBI" id="CHEBI:33019"/>
        <dbReference type="ChEBI" id="CHEBI:57972"/>
        <dbReference type="ChEBI" id="CHEBI:78442"/>
        <dbReference type="ChEBI" id="CHEBI:78497"/>
        <dbReference type="ChEBI" id="CHEBI:456215"/>
        <dbReference type="EC" id="6.1.1.7"/>
    </reaction>
</comment>
<comment type="cofactor">
    <cofactor evidence="1">
        <name>Zn(2+)</name>
        <dbReference type="ChEBI" id="CHEBI:29105"/>
    </cofactor>
    <text evidence="1">Binds 1 zinc ion per subunit.</text>
</comment>
<comment type="subcellular location">
    <subcellularLocation>
        <location evidence="1">Cytoplasm</location>
    </subcellularLocation>
</comment>
<comment type="domain">
    <text evidence="1">Consists of three domains; the N-terminal catalytic domain, the editing domain and the C-terminal C-Ala domain. The editing domain removes incorrectly charged amino acids, while the C-Ala domain, along with tRNA(Ala), serves as a bridge to cooperatively bring together the editing and aminoacylation centers thus stimulating deacylation of misacylated tRNAs.</text>
</comment>
<comment type="similarity">
    <text evidence="1">Belongs to the class-II aminoacyl-tRNA synthetase family.</text>
</comment>